<feature type="chain" id="PRO_0000323984" description="Uridylate kinase">
    <location>
        <begin position="1"/>
        <end position="246"/>
    </location>
</feature>
<feature type="binding site" evidence="1">
    <location>
        <begin position="19"/>
        <end position="22"/>
    </location>
    <ligand>
        <name>ATP</name>
        <dbReference type="ChEBI" id="CHEBI:30616"/>
    </ligand>
</feature>
<feature type="binding site" evidence="1">
    <location>
        <position position="61"/>
    </location>
    <ligand>
        <name>UMP</name>
        <dbReference type="ChEBI" id="CHEBI:57865"/>
    </ligand>
</feature>
<feature type="binding site" evidence="1">
    <location>
        <position position="62"/>
    </location>
    <ligand>
        <name>ATP</name>
        <dbReference type="ChEBI" id="CHEBI:30616"/>
    </ligand>
</feature>
<feature type="binding site" evidence="1">
    <location>
        <position position="66"/>
    </location>
    <ligand>
        <name>ATP</name>
        <dbReference type="ChEBI" id="CHEBI:30616"/>
    </ligand>
</feature>
<feature type="binding site" evidence="1">
    <location>
        <position position="81"/>
    </location>
    <ligand>
        <name>UMP</name>
        <dbReference type="ChEBI" id="CHEBI:57865"/>
    </ligand>
</feature>
<feature type="binding site" evidence="1">
    <location>
        <begin position="142"/>
        <end position="149"/>
    </location>
    <ligand>
        <name>UMP</name>
        <dbReference type="ChEBI" id="CHEBI:57865"/>
    </ligand>
</feature>
<feature type="binding site" evidence="1">
    <location>
        <position position="169"/>
    </location>
    <ligand>
        <name>ATP</name>
        <dbReference type="ChEBI" id="CHEBI:30616"/>
    </ligand>
</feature>
<feature type="binding site" evidence="1">
    <location>
        <position position="170"/>
    </location>
    <ligand>
        <name>ATP</name>
        <dbReference type="ChEBI" id="CHEBI:30616"/>
    </ligand>
</feature>
<feature type="binding site" evidence="1">
    <location>
        <position position="175"/>
    </location>
    <ligand>
        <name>ATP</name>
        <dbReference type="ChEBI" id="CHEBI:30616"/>
    </ligand>
</feature>
<feature type="binding site" evidence="1">
    <location>
        <position position="178"/>
    </location>
    <ligand>
        <name>ATP</name>
        <dbReference type="ChEBI" id="CHEBI:30616"/>
    </ligand>
</feature>
<protein>
    <recommendedName>
        <fullName evidence="1">Uridylate kinase</fullName>
        <shortName evidence="1">UK</shortName>
        <ecNumber evidence="1">2.7.4.22</ecNumber>
    </recommendedName>
    <alternativeName>
        <fullName evidence="1">Uridine monophosphate kinase</fullName>
        <shortName evidence="1">UMP kinase</shortName>
        <shortName evidence="1">UMPK</shortName>
    </alternativeName>
</protein>
<evidence type="ECO:0000255" key="1">
    <source>
        <dbReference type="HAMAP-Rule" id="MF_01220"/>
    </source>
</evidence>
<sequence>MHASTGKGSKIKYSRVLFKISGEALMGSRPFGHDMELIDQLCKDISDIYKLGVQVCIVVGGGNIFRGASASLSGCERASSDYIGMLATIINALILQNFLEKNSVNSKVLSAIPMVTICEPYIRRKAIHHLEKGRVVIFAAGTGNPFFTTDTAAALRAVETNCDAILKGTQVNGVYSADPKKNEDAVMYDRLSYMDLLTRDLKVVDASAISLARENSIPIIVFSLKEEKIVNIVKGHGTYTIVSDCE</sequence>
<dbReference type="EC" id="2.7.4.22" evidence="1"/>
<dbReference type="EMBL" id="AE017321">
    <property type="protein sequence ID" value="AAW71394.1"/>
    <property type="molecule type" value="Genomic_DNA"/>
</dbReference>
<dbReference type="RefSeq" id="WP_011257003.1">
    <property type="nucleotide sequence ID" value="NC_006833.1"/>
</dbReference>
<dbReference type="SMR" id="Q5GRI0"/>
<dbReference type="STRING" id="292805.Wbm0806"/>
<dbReference type="KEGG" id="wbm:Wbm0806"/>
<dbReference type="eggNOG" id="COG0528">
    <property type="taxonomic scope" value="Bacteria"/>
</dbReference>
<dbReference type="HOGENOM" id="CLU_033861_0_0_5"/>
<dbReference type="UniPathway" id="UPA00159">
    <property type="reaction ID" value="UER00275"/>
</dbReference>
<dbReference type="Proteomes" id="UP000000534">
    <property type="component" value="Chromosome"/>
</dbReference>
<dbReference type="GO" id="GO:0005829">
    <property type="term" value="C:cytosol"/>
    <property type="evidence" value="ECO:0007669"/>
    <property type="project" value="TreeGrafter"/>
</dbReference>
<dbReference type="GO" id="GO:0005524">
    <property type="term" value="F:ATP binding"/>
    <property type="evidence" value="ECO:0007669"/>
    <property type="project" value="UniProtKB-KW"/>
</dbReference>
<dbReference type="GO" id="GO:0033862">
    <property type="term" value="F:UMP kinase activity"/>
    <property type="evidence" value="ECO:0007669"/>
    <property type="project" value="UniProtKB-EC"/>
</dbReference>
<dbReference type="GO" id="GO:0044210">
    <property type="term" value="P:'de novo' CTP biosynthetic process"/>
    <property type="evidence" value="ECO:0007669"/>
    <property type="project" value="UniProtKB-UniRule"/>
</dbReference>
<dbReference type="GO" id="GO:0006225">
    <property type="term" value="P:UDP biosynthetic process"/>
    <property type="evidence" value="ECO:0007669"/>
    <property type="project" value="TreeGrafter"/>
</dbReference>
<dbReference type="CDD" id="cd04254">
    <property type="entry name" value="AAK_UMPK-PyrH-Ec"/>
    <property type="match status" value="1"/>
</dbReference>
<dbReference type="FunFam" id="3.40.1160.10:FF:000001">
    <property type="entry name" value="Uridylate kinase"/>
    <property type="match status" value="1"/>
</dbReference>
<dbReference type="Gene3D" id="3.40.1160.10">
    <property type="entry name" value="Acetylglutamate kinase-like"/>
    <property type="match status" value="1"/>
</dbReference>
<dbReference type="HAMAP" id="MF_01220_B">
    <property type="entry name" value="PyrH_B"/>
    <property type="match status" value="1"/>
</dbReference>
<dbReference type="InterPro" id="IPR036393">
    <property type="entry name" value="AceGlu_kinase-like_sf"/>
</dbReference>
<dbReference type="InterPro" id="IPR001048">
    <property type="entry name" value="Asp/Glu/Uridylate_kinase"/>
</dbReference>
<dbReference type="InterPro" id="IPR011817">
    <property type="entry name" value="Uridylate_kinase"/>
</dbReference>
<dbReference type="InterPro" id="IPR015963">
    <property type="entry name" value="Uridylate_kinase_bac"/>
</dbReference>
<dbReference type="NCBIfam" id="TIGR02075">
    <property type="entry name" value="pyrH_bact"/>
    <property type="match status" value="1"/>
</dbReference>
<dbReference type="PANTHER" id="PTHR42833">
    <property type="entry name" value="URIDYLATE KINASE"/>
    <property type="match status" value="1"/>
</dbReference>
<dbReference type="PANTHER" id="PTHR42833:SF4">
    <property type="entry name" value="URIDYLATE KINASE PUMPKIN, CHLOROPLASTIC"/>
    <property type="match status" value="1"/>
</dbReference>
<dbReference type="Pfam" id="PF00696">
    <property type="entry name" value="AA_kinase"/>
    <property type="match status" value="1"/>
</dbReference>
<dbReference type="PIRSF" id="PIRSF005650">
    <property type="entry name" value="Uridylate_kin"/>
    <property type="match status" value="1"/>
</dbReference>
<dbReference type="SUPFAM" id="SSF53633">
    <property type="entry name" value="Carbamate kinase-like"/>
    <property type="match status" value="1"/>
</dbReference>
<accession>Q5GRI0</accession>
<proteinExistence type="inferred from homology"/>
<reference key="1">
    <citation type="journal article" date="2005" name="PLoS Biol.">
        <title>The Wolbachia genome of Brugia malayi: endosymbiont evolution within a human pathogenic nematode.</title>
        <authorList>
            <person name="Foster J."/>
            <person name="Ganatra M."/>
            <person name="Kamal I."/>
            <person name="Ware J."/>
            <person name="Makarova K."/>
            <person name="Ivanova N."/>
            <person name="Bhattacharyya A."/>
            <person name="Kapatral V."/>
            <person name="Kumar S."/>
            <person name="Posfai J."/>
            <person name="Vincze T."/>
            <person name="Ingram J."/>
            <person name="Moran L."/>
            <person name="Lapidus A."/>
            <person name="Omelchenko M."/>
            <person name="Kyrpides N."/>
            <person name="Ghedin E."/>
            <person name="Wang S."/>
            <person name="Goltsman E."/>
            <person name="Joukov V."/>
            <person name="Ostrovskaya O."/>
            <person name="Tsukerman K."/>
            <person name="Mazur M."/>
            <person name="Comb D."/>
            <person name="Koonin E."/>
            <person name="Slatko B."/>
        </authorList>
    </citation>
    <scope>NUCLEOTIDE SEQUENCE [LARGE SCALE GENOMIC DNA]</scope>
    <source>
        <strain>TRS</strain>
    </source>
</reference>
<comment type="function">
    <text evidence="1">Catalyzes the reversible phosphorylation of UMP to UDP.</text>
</comment>
<comment type="catalytic activity">
    <reaction evidence="1">
        <text>UMP + ATP = UDP + ADP</text>
        <dbReference type="Rhea" id="RHEA:24400"/>
        <dbReference type="ChEBI" id="CHEBI:30616"/>
        <dbReference type="ChEBI" id="CHEBI:57865"/>
        <dbReference type="ChEBI" id="CHEBI:58223"/>
        <dbReference type="ChEBI" id="CHEBI:456216"/>
        <dbReference type="EC" id="2.7.4.22"/>
    </reaction>
</comment>
<comment type="activity regulation">
    <text evidence="1">Inhibited by UTP.</text>
</comment>
<comment type="pathway">
    <text evidence="1">Pyrimidine metabolism; CTP biosynthesis via de novo pathway; UDP from UMP (UMPK route): step 1/1.</text>
</comment>
<comment type="subunit">
    <text evidence="1">Homohexamer.</text>
</comment>
<comment type="subcellular location">
    <subcellularLocation>
        <location evidence="1">Cytoplasm</location>
    </subcellularLocation>
</comment>
<comment type="similarity">
    <text evidence="1">Belongs to the UMP kinase family.</text>
</comment>
<gene>
    <name evidence="1" type="primary">pyrH</name>
    <name type="ordered locus">Wbm0806</name>
</gene>
<name>PYRH_WOLTR</name>
<keyword id="KW-0067">ATP-binding</keyword>
<keyword id="KW-0963">Cytoplasm</keyword>
<keyword id="KW-0418">Kinase</keyword>
<keyword id="KW-0547">Nucleotide-binding</keyword>
<keyword id="KW-0665">Pyrimidine biosynthesis</keyword>
<keyword id="KW-1185">Reference proteome</keyword>
<keyword id="KW-0808">Transferase</keyword>
<organism>
    <name type="scientific">Wolbachia sp. subsp. Brugia malayi (strain TRS)</name>
    <dbReference type="NCBI Taxonomy" id="292805"/>
    <lineage>
        <taxon>Bacteria</taxon>
        <taxon>Pseudomonadati</taxon>
        <taxon>Pseudomonadota</taxon>
        <taxon>Alphaproteobacteria</taxon>
        <taxon>Rickettsiales</taxon>
        <taxon>Anaplasmataceae</taxon>
        <taxon>Wolbachieae</taxon>
        <taxon>Wolbachia</taxon>
    </lineage>
</organism>